<evidence type="ECO:0000255" key="1">
    <source>
        <dbReference type="HAMAP-Rule" id="MF_00031"/>
    </source>
</evidence>
<protein>
    <recommendedName>
        <fullName evidence="1">Holliday junction branch migration complex subunit RuvA</fullName>
    </recommendedName>
</protein>
<comment type="function">
    <text evidence="1">The RuvA-RuvB-RuvC complex processes Holliday junction (HJ) DNA during genetic recombination and DNA repair, while the RuvA-RuvB complex plays an important role in the rescue of blocked DNA replication forks via replication fork reversal (RFR). RuvA specifically binds to HJ cruciform DNA, conferring on it an open structure. The RuvB hexamer acts as an ATP-dependent pump, pulling dsDNA into and through the RuvAB complex. HJ branch migration allows RuvC to scan DNA until it finds its consensus sequence, where it cleaves and resolves the cruciform DNA.</text>
</comment>
<comment type="subunit">
    <text evidence="1">Homotetramer. Forms an RuvA(8)-RuvB(12)-Holliday junction (HJ) complex. HJ DNA is sandwiched between 2 RuvA tetramers; dsDNA enters through RuvA and exits via RuvB. An RuvB hexamer assembles on each DNA strand where it exits the tetramer. Each RuvB hexamer is contacted by two RuvA subunits (via domain III) on 2 adjacent RuvB subunits; this complex drives branch migration. In the full resolvosome a probable DNA-RuvA(4)-RuvB(12)-RuvC(2) complex forms which resolves the HJ.</text>
</comment>
<comment type="subcellular location">
    <subcellularLocation>
        <location evidence="1">Cytoplasm</location>
    </subcellularLocation>
</comment>
<comment type="domain">
    <text evidence="1">Has three domains with a flexible linker between the domains II and III and assumes an 'L' shape. Domain III is highly mobile and contacts RuvB.</text>
</comment>
<comment type="similarity">
    <text evidence="1">Belongs to the RuvA family.</text>
</comment>
<keyword id="KW-0963">Cytoplasm</keyword>
<keyword id="KW-0227">DNA damage</keyword>
<keyword id="KW-0233">DNA recombination</keyword>
<keyword id="KW-0234">DNA repair</keyword>
<keyword id="KW-0238">DNA-binding</keyword>
<gene>
    <name evidence="1" type="primary">ruvA</name>
    <name type="ordered locus">SACOL1697</name>
</gene>
<dbReference type="EMBL" id="CP000046">
    <property type="protein sequence ID" value="AAW36803.1"/>
    <property type="molecule type" value="Genomic_DNA"/>
</dbReference>
<dbReference type="RefSeq" id="WP_000271547.1">
    <property type="nucleotide sequence ID" value="NZ_JBGOFO010000003.1"/>
</dbReference>
<dbReference type="SMR" id="Q5HFC1"/>
<dbReference type="KEGG" id="sac:SACOL1697"/>
<dbReference type="HOGENOM" id="CLU_087936_1_0_9"/>
<dbReference type="Proteomes" id="UP000000530">
    <property type="component" value="Chromosome"/>
</dbReference>
<dbReference type="GO" id="GO:0005737">
    <property type="term" value="C:cytoplasm"/>
    <property type="evidence" value="ECO:0007669"/>
    <property type="project" value="UniProtKB-SubCell"/>
</dbReference>
<dbReference type="GO" id="GO:0009379">
    <property type="term" value="C:Holliday junction helicase complex"/>
    <property type="evidence" value="ECO:0007669"/>
    <property type="project" value="InterPro"/>
</dbReference>
<dbReference type="GO" id="GO:0048476">
    <property type="term" value="C:Holliday junction resolvase complex"/>
    <property type="evidence" value="ECO:0007669"/>
    <property type="project" value="UniProtKB-UniRule"/>
</dbReference>
<dbReference type="GO" id="GO:0005524">
    <property type="term" value="F:ATP binding"/>
    <property type="evidence" value="ECO:0007669"/>
    <property type="project" value="InterPro"/>
</dbReference>
<dbReference type="GO" id="GO:0000400">
    <property type="term" value="F:four-way junction DNA binding"/>
    <property type="evidence" value="ECO:0007669"/>
    <property type="project" value="UniProtKB-UniRule"/>
</dbReference>
<dbReference type="GO" id="GO:0009378">
    <property type="term" value="F:four-way junction helicase activity"/>
    <property type="evidence" value="ECO:0007669"/>
    <property type="project" value="InterPro"/>
</dbReference>
<dbReference type="GO" id="GO:0006310">
    <property type="term" value="P:DNA recombination"/>
    <property type="evidence" value="ECO:0007669"/>
    <property type="project" value="UniProtKB-UniRule"/>
</dbReference>
<dbReference type="GO" id="GO:0006281">
    <property type="term" value="P:DNA repair"/>
    <property type="evidence" value="ECO:0007669"/>
    <property type="project" value="UniProtKB-UniRule"/>
</dbReference>
<dbReference type="CDD" id="cd14332">
    <property type="entry name" value="UBA_RuvA_C"/>
    <property type="match status" value="1"/>
</dbReference>
<dbReference type="Gene3D" id="1.10.150.20">
    <property type="entry name" value="5' to 3' exonuclease, C-terminal subdomain"/>
    <property type="match status" value="1"/>
</dbReference>
<dbReference type="Gene3D" id="1.10.8.10">
    <property type="entry name" value="DNA helicase RuvA subunit, C-terminal domain"/>
    <property type="match status" value="1"/>
</dbReference>
<dbReference type="Gene3D" id="2.40.50.140">
    <property type="entry name" value="Nucleic acid-binding proteins"/>
    <property type="match status" value="1"/>
</dbReference>
<dbReference type="HAMAP" id="MF_00031">
    <property type="entry name" value="DNA_HJ_migration_RuvA"/>
    <property type="match status" value="1"/>
</dbReference>
<dbReference type="InterPro" id="IPR013849">
    <property type="entry name" value="DNA_helicase_Holl-junc_RuvA_I"/>
</dbReference>
<dbReference type="InterPro" id="IPR003583">
    <property type="entry name" value="Hlx-hairpin-Hlx_DNA-bd_motif"/>
</dbReference>
<dbReference type="InterPro" id="IPR012340">
    <property type="entry name" value="NA-bd_OB-fold"/>
</dbReference>
<dbReference type="InterPro" id="IPR000085">
    <property type="entry name" value="RuvA"/>
</dbReference>
<dbReference type="InterPro" id="IPR010994">
    <property type="entry name" value="RuvA_2-like"/>
</dbReference>
<dbReference type="InterPro" id="IPR011114">
    <property type="entry name" value="RuvA_C"/>
</dbReference>
<dbReference type="InterPro" id="IPR036267">
    <property type="entry name" value="RuvA_C_sf"/>
</dbReference>
<dbReference type="NCBIfam" id="TIGR00084">
    <property type="entry name" value="ruvA"/>
    <property type="match status" value="1"/>
</dbReference>
<dbReference type="Pfam" id="PF14520">
    <property type="entry name" value="HHH_5"/>
    <property type="match status" value="1"/>
</dbReference>
<dbReference type="Pfam" id="PF07499">
    <property type="entry name" value="RuvA_C"/>
    <property type="match status" value="1"/>
</dbReference>
<dbReference type="Pfam" id="PF01330">
    <property type="entry name" value="RuvA_N"/>
    <property type="match status" value="1"/>
</dbReference>
<dbReference type="SMART" id="SM00278">
    <property type="entry name" value="HhH1"/>
    <property type="match status" value="2"/>
</dbReference>
<dbReference type="SUPFAM" id="SSF46929">
    <property type="entry name" value="DNA helicase RuvA subunit, C-terminal domain"/>
    <property type="match status" value="1"/>
</dbReference>
<dbReference type="SUPFAM" id="SSF50249">
    <property type="entry name" value="Nucleic acid-binding proteins"/>
    <property type="match status" value="1"/>
</dbReference>
<dbReference type="SUPFAM" id="SSF47781">
    <property type="entry name" value="RuvA domain 2-like"/>
    <property type="match status" value="1"/>
</dbReference>
<proteinExistence type="inferred from homology"/>
<sequence>MYAYVKGKLTHLYPTHVVVETAGVGYEIQTPNSYRFQKHLDHEVLIHTSLIVREDAQLLYGFSSEEEKDMFLSLIKVTGIGPKSALAILATSTPNEVKRAIENENDTYLTKFPGIGKKTARQIVLDLKGKVKITEEDSDSLLQVDATSTVQDQFVQEAMLALEALGYSKRELAKVEKTLNKNKYDSVDEAVKAGLQLVVS</sequence>
<name>RUVA_STAAC</name>
<feature type="chain" id="PRO_0000094678" description="Holliday junction branch migration complex subunit RuvA">
    <location>
        <begin position="1"/>
        <end position="200"/>
    </location>
</feature>
<feature type="region of interest" description="Domain I" evidence="1">
    <location>
        <begin position="1"/>
        <end position="63"/>
    </location>
</feature>
<feature type="region of interest" description="Domain II" evidence="1">
    <location>
        <begin position="64"/>
        <end position="142"/>
    </location>
</feature>
<feature type="region of interest" description="Flexible linker" evidence="1">
    <location>
        <begin position="143"/>
        <end position="149"/>
    </location>
</feature>
<feature type="region of interest" description="Domain III" evidence="1">
    <location>
        <begin position="150"/>
        <end position="200"/>
    </location>
</feature>
<accession>Q5HFC1</accession>
<organism>
    <name type="scientific">Staphylococcus aureus (strain COL)</name>
    <dbReference type="NCBI Taxonomy" id="93062"/>
    <lineage>
        <taxon>Bacteria</taxon>
        <taxon>Bacillati</taxon>
        <taxon>Bacillota</taxon>
        <taxon>Bacilli</taxon>
        <taxon>Bacillales</taxon>
        <taxon>Staphylococcaceae</taxon>
        <taxon>Staphylococcus</taxon>
    </lineage>
</organism>
<reference key="1">
    <citation type="journal article" date="2005" name="J. Bacteriol.">
        <title>Insights on evolution of virulence and resistance from the complete genome analysis of an early methicillin-resistant Staphylococcus aureus strain and a biofilm-producing methicillin-resistant Staphylococcus epidermidis strain.</title>
        <authorList>
            <person name="Gill S.R."/>
            <person name="Fouts D.E."/>
            <person name="Archer G.L."/>
            <person name="Mongodin E.F."/>
            <person name="DeBoy R.T."/>
            <person name="Ravel J."/>
            <person name="Paulsen I.T."/>
            <person name="Kolonay J.F."/>
            <person name="Brinkac L.M."/>
            <person name="Beanan M.J."/>
            <person name="Dodson R.J."/>
            <person name="Daugherty S.C."/>
            <person name="Madupu R."/>
            <person name="Angiuoli S.V."/>
            <person name="Durkin A.S."/>
            <person name="Haft D.H."/>
            <person name="Vamathevan J.J."/>
            <person name="Khouri H."/>
            <person name="Utterback T.R."/>
            <person name="Lee C."/>
            <person name="Dimitrov G."/>
            <person name="Jiang L."/>
            <person name="Qin H."/>
            <person name="Weidman J."/>
            <person name="Tran K."/>
            <person name="Kang K.H."/>
            <person name="Hance I.R."/>
            <person name="Nelson K.E."/>
            <person name="Fraser C.M."/>
        </authorList>
    </citation>
    <scope>NUCLEOTIDE SEQUENCE [LARGE SCALE GENOMIC DNA]</scope>
    <source>
        <strain>COL</strain>
    </source>
</reference>